<reference key="1">
    <citation type="submission" date="2008-02" db="EMBL/GenBank/DDBJ databases">
        <title>Complete sequence of chromosome 1 of Burkholderia cenocepacia MC0-3.</title>
        <authorList>
            <person name="Copeland A."/>
            <person name="Lucas S."/>
            <person name="Lapidus A."/>
            <person name="Barry K."/>
            <person name="Bruce D."/>
            <person name="Goodwin L."/>
            <person name="Glavina del Rio T."/>
            <person name="Dalin E."/>
            <person name="Tice H."/>
            <person name="Pitluck S."/>
            <person name="Chain P."/>
            <person name="Malfatti S."/>
            <person name="Shin M."/>
            <person name="Vergez L."/>
            <person name="Schmutz J."/>
            <person name="Larimer F."/>
            <person name="Land M."/>
            <person name="Hauser L."/>
            <person name="Kyrpides N."/>
            <person name="Mikhailova N."/>
            <person name="Tiedje J."/>
            <person name="Richardson P."/>
        </authorList>
    </citation>
    <scope>NUCLEOTIDE SEQUENCE [LARGE SCALE GENOMIC DNA]</scope>
    <source>
        <strain>MC0-3</strain>
    </source>
</reference>
<evidence type="ECO:0000255" key="1">
    <source>
        <dbReference type="HAMAP-Rule" id="MF_01358"/>
    </source>
</evidence>
<proteinExistence type="inferred from homology"/>
<sequence>MAEIKNYTLNFGPQHPAAHGVLRLVLELDGEVIQRADPHIGLLHRATEKLAESKTFIQSVPYMDRLDYVSMMVNEHGYVLAIEKLLGIEVPERAQYIRVLFDEITRVLNHLMWIGAHALDVGAMAVFLYAFREREDLMDVYEAVSGARMHAAYYRPGGVYRDLPDAMPQYKASKIRNEKALAKMNEARSGSVLDFIDDFFTRFPKCVDEYETLLTDNRIWKQRLVGIGVVSPERALQMGLTGPMLRGSGIAWDLRKKQPYEVYDRMDFDVPVGVNGDCYDRYLVRVEEMRQSILIAKQCIEWLRKNPGPVMTDNHKVAPPSRVGMKTNMEDLIHHFKLFTEGFHVPEGEAYAAVEHPKGEFGIYLVSDGANKPYRLKIRAPGFAHLASLDEMARGHMIADAVTIIGTQDIVFGEIDR</sequence>
<feature type="chain" id="PRO_0000371826" description="NADH-quinone oxidoreductase subunit D">
    <location>
        <begin position="1"/>
        <end position="417"/>
    </location>
</feature>
<name>NUOD_BURO0</name>
<keyword id="KW-0997">Cell inner membrane</keyword>
<keyword id="KW-1003">Cell membrane</keyword>
<keyword id="KW-0472">Membrane</keyword>
<keyword id="KW-0520">NAD</keyword>
<keyword id="KW-0874">Quinone</keyword>
<keyword id="KW-1278">Translocase</keyword>
<keyword id="KW-0813">Transport</keyword>
<keyword id="KW-0830">Ubiquinone</keyword>
<accession>B1JVN8</accession>
<comment type="function">
    <text evidence="1">NDH-1 shuttles electrons from NADH, via FMN and iron-sulfur (Fe-S) centers, to quinones in the respiratory chain. The immediate electron acceptor for the enzyme in this species is believed to be ubiquinone. Couples the redox reaction to proton translocation (for every two electrons transferred, four hydrogen ions are translocated across the cytoplasmic membrane), and thus conserves the redox energy in a proton gradient.</text>
</comment>
<comment type="catalytic activity">
    <reaction evidence="1">
        <text>a quinone + NADH + 5 H(+)(in) = a quinol + NAD(+) + 4 H(+)(out)</text>
        <dbReference type="Rhea" id="RHEA:57888"/>
        <dbReference type="ChEBI" id="CHEBI:15378"/>
        <dbReference type="ChEBI" id="CHEBI:24646"/>
        <dbReference type="ChEBI" id="CHEBI:57540"/>
        <dbReference type="ChEBI" id="CHEBI:57945"/>
        <dbReference type="ChEBI" id="CHEBI:132124"/>
    </reaction>
</comment>
<comment type="subunit">
    <text evidence="1">NDH-1 is composed of 14 different subunits. Subunits NuoB, C, D, E, F, and G constitute the peripheral sector of the complex.</text>
</comment>
<comment type="subcellular location">
    <subcellularLocation>
        <location evidence="1">Cell inner membrane</location>
        <topology evidence="1">Peripheral membrane protein</topology>
        <orientation evidence="1">Cytoplasmic side</orientation>
    </subcellularLocation>
</comment>
<comment type="similarity">
    <text evidence="1">Belongs to the complex I 49 kDa subunit family.</text>
</comment>
<gene>
    <name evidence="1" type="primary">nuoD</name>
    <name type="ordered locus">Bcenmc03_2270</name>
</gene>
<dbReference type="EC" id="7.1.1.-" evidence="1"/>
<dbReference type="EMBL" id="CP000958">
    <property type="protein sequence ID" value="ACA91431.1"/>
    <property type="molecule type" value="Genomic_DNA"/>
</dbReference>
<dbReference type="RefSeq" id="WP_012328905.1">
    <property type="nucleotide sequence ID" value="NC_010508.1"/>
</dbReference>
<dbReference type="SMR" id="B1JVN8"/>
<dbReference type="GeneID" id="83049058"/>
<dbReference type="KEGG" id="bcm:Bcenmc03_2270"/>
<dbReference type="HOGENOM" id="CLU_015134_1_1_4"/>
<dbReference type="Proteomes" id="UP000002169">
    <property type="component" value="Chromosome 1"/>
</dbReference>
<dbReference type="GO" id="GO:0005886">
    <property type="term" value="C:plasma membrane"/>
    <property type="evidence" value="ECO:0007669"/>
    <property type="project" value="UniProtKB-SubCell"/>
</dbReference>
<dbReference type="GO" id="GO:0051287">
    <property type="term" value="F:NAD binding"/>
    <property type="evidence" value="ECO:0007669"/>
    <property type="project" value="InterPro"/>
</dbReference>
<dbReference type="GO" id="GO:0050136">
    <property type="term" value="F:NADH:ubiquinone reductase (non-electrogenic) activity"/>
    <property type="evidence" value="ECO:0007669"/>
    <property type="project" value="UniProtKB-UniRule"/>
</dbReference>
<dbReference type="GO" id="GO:0048038">
    <property type="term" value="F:quinone binding"/>
    <property type="evidence" value="ECO:0007669"/>
    <property type="project" value="UniProtKB-KW"/>
</dbReference>
<dbReference type="FunFam" id="1.10.645.10:FF:000005">
    <property type="entry name" value="NADH-quinone oxidoreductase subunit D"/>
    <property type="match status" value="1"/>
</dbReference>
<dbReference type="Gene3D" id="1.10.645.10">
    <property type="entry name" value="Cytochrome-c3 Hydrogenase, chain B"/>
    <property type="match status" value="1"/>
</dbReference>
<dbReference type="HAMAP" id="MF_01358">
    <property type="entry name" value="NDH1_NuoD"/>
    <property type="match status" value="1"/>
</dbReference>
<dbReference type="InterPro" id="IPR001135">
    <property type="entry name" value="NADH_Q_OxRdtase_suD"/>
</dbReference>
<dbReference type="InterPro" id="IPR014029">
    <property type="entry name" value="NADH_UbQ_OxRdtase_49kDa_CS"/>
</dbReference>
<dbReference type="InterPro" id="IPR022885">
    <property type="entry name" value="NDH1_su_D/H"/>
</dbReference>
<dbReference type="InterPro" id="IPR029014">
    <property type="entry name" value="NiFe-Hase_large"/>
</dbReference>
<dbReference type="NCBIfam" id="TIGR01962">
    <property type="entry name" value="NuoD"/>
    <property type="match status" value="1"/>
</dbReference>
<dbReference type="NCBIfam" id="NF004739">
    <property type="entry name" value="PRK06075.1"/>
    <property type="match status" value="1"/>
</dbReference>
<dbReference type="PANTHER" id="PTHR11993:SF10">
    <property type="entry name" value="NADH DEHYDROGENASE [UBIQUINONE] IRON-SULFUR PROTEIN 2, MITOCHONDRIAL"/>
    <property type="match status" value="1"/>
</dbReference>
<dbReference type="PANTHER" id="PTHR11993">
    <property type="entry name" value="NADH-UBIQUINONE OXIDOREDUCTASE 49 KDA SUBUNIT"/>
    <property type="match status" value="1"/>
</dbReference>
<dbReference type="Pfam" id="PF00346">
    <property type="entry name" value="Complex1_49kDa"/>
    <property type="match status" value="1"/>
</dbReference>
<dbReference type="SUPFAM" id="SSF56762">
    <property type="entry name" value="HydB/Nqo4-like"/>
    <property type="match status" value="1"/>
</dbReference>
<dbReference type="PROSITE" id="PS00535">
    <property type="entry name" value="COMPLEX1_49K"/>
    <property type="match status" value="1"/>
</dbReference>
<protein>
    <recommendedName>
        <fullName evidence="1">NADH-quinone oxidoreductase subunit D</fullName>
        <ecNumber evidence="1">7.1.1.-</ecNumber>
    </recommendedName>
    <alternativeName>
        <fullName evidence="1">NADH dehydrogenase I subunit D</fullName>
    </alternativeName>
    <alternativeName>
        <fullName evidence="1">NDH-1 subunit D</fullName>
    </alternativeName>
</protein>
<organism>
    <name type="scientific">Burkholderia orbicola (strain MC0-3)</name>
    <dbReference type="NCBI Taxonomy" id="406425"/>
    <lineage>
        <taxon>Bacteria</taxon>
        <taxon>Pseudomonadati</taxon>
        <taxon>Pseudomonadota</taxon>
        <taxon>Betaproteobacteria</taxon>
        <taxon>Burkholderiales</taxon>
        <taxon>Burkholderiaceae</taxon>
        <taxon>Burkholderia</taxon>
        <taxon>Burkholderia cepacia complex</taxon>
        <taxon>Burkholderia orbicola</taxon>
    </lineage>
</organism>